<evidence type="ECO:0000250" key="1">
    <source>
        <dbReference type="UniProtKB" id="P27942"/>
    </source>
</evidence>
<evidence type="ECO:0000305" key="2"/>
<comment type="subcellular location">
    <subcellularLocation>
        <location evidence="1">Virion</location>
    </subcellularLocation>
</comment>
<comment type="induction">
    <text evidence="2">Expressed in the late phase of the viral replicative cycle.</text>
</comment>
<comment type="similarity">
    <text evidence="2">Belongs to the asfivirus I177L family.</text>
</comment>
<accession>P0CA82</accession>
<keyword id="KW-0426">Late protein</keyword>
<keyword id="KW-0946">Virion</keyword>
<organismHost>
    <name type="scientific">Ornithodoros</name>
    <name type="common">relapsing fever ticks</name>
    <dbReference type="NCBI Taxonomy" id="6937"/>
</organismHost>
<organismHost>
    <name type="scientific">Phacochoerus aethiopicus</name>
    <name type="common">Warthog</name>
    <dbReference type="NCBI Taxonomy" id="85517"/>
</organismHost>
<organismHost>
    <name type="scientific">Phacochoerus africanus</name>
    <name type="common">Warthog</name>
    <dbReference type="NCBI Taxonomy" id="41426"/>
</organismHost>
<organismHost>
    <name type="scientific">Potamochoerus larvatus</name>
    <name type="common">Bushpig</name>
    <dbReference type="NCBI Taxonomy" id="273792"/>
</organismHost>
<organismHost>
    <name type="scientific">Sus scrofa</name>
    <name type="common">Pig</name>
    <dbReference type="NCBI Taxonomy" id="9823"/>
</organismHost>
<protein>
    <recommendedName>
        <fullName>Protein I177L</fullName>
    </recommendedName>
</protein>
<gene>
    <name type="ordered locus">Pret-157</name>
</gene>
<feature type="chain" id="PRO_0000373565" description="Protein I177L">
    <location>
        <begin position="1"/>
        <end position="66"/>
    </location>
</feature>
<dbReference type="EMBL" id="AY261363">
    <property type="status" value="NOT_ANNOTATED_CDS"/>
    <property type="molecule type" value="Genomic_DNA"/>
</dbReference>
<dbReference type="Proteomes" id="UP000000859">
    <property type="component" value="Segment"/>
</dbReference>
<dbReference type="GO" id="GO:0044423">
    <property type="term" value="C:virion component"/>
    <property type="evidence" value="ECO:0007669"/>
    <property type="project" value="UniProtKB-KW"/>
</dbReference>
<name>VF177_ASFP4</name>
<proteinExistence type="inferred from homology"/>
<reference key="1">
    <citation type="submission" date="2003-03" db="EMBL/GenBank/DDBJ databases">
        <title>African swine fever virus genomes.</title>
        <authorList>
            <person name="Kutish G.F."/>
            <person name="Rock D.L."/>
        </authorList>
    </citation>
    <scope>NUCLEOTIDE SEQUENCE [LARGE SCALE GENOMIC DNA]</scope>
</reference>
<sequence>MWKVNDQGFLNISVTGTKLNLIAITGKLGFYADPPSHLIIMPLKFFPVHKFSKNEPNKKQKRFIYF</sequence>
<organism>
    <name type="scientific">African swine fever virus (isolate Tick/South Africa/Pretoriuskop Pr4/1996)</name>
    <name type="common">ASFV</name>
    <dbReference type="NCBI Taxonomy" id="561443"/>
    <lineage>
        <taxon>Viruses</taxon>
        <taxon>Varidnaviria</taxon>
        <taxon>Bamfordvirae</taxon>
        <taxon>Nucleocytoviricota</taxon>
        <taxon>Pokkesviricetes</taxon>
        <taxon>Asfuvirales</taxon>
        <taxon>Asfarviridae</taxon>
        <taxon>Asfivirus</taxon>
        <taxon>African swine fever virus</taxon>
    </lineage>
</organism>